<organism>
    <name type="scientific">Salmonella typhimurium (strain LT2 / SGSC1412 / ATCC 700720)</name>
    <dbReference type="NCBI Taxonomy" id="99287"/>
    <lineage>
        <taxon>Bacteria</taxon>
        <taxon>Pseudomonadati</taxon>
        <taxon>Pseudomonadota</taxon>
        <taxon>Gammaproteobacteria</taxon>
        <taxon>Enterobacterales</taxon>
        <taxon>Enterobacteriaceae</taxon>
        <taxon>Salmonella</taxon>
    </lineage>
</organism>
<evidence type="ECO:0000305" key="1"/>
<protein>
    <recommendedName>
        <fullName>Protein gns</fullName>
    </recommendedName>
</protein>
<reference key="1">
    <citation type="journal article" date="2001" name="Nature">
        <title>Complete genome sequence of Salmonella enterica serovar Typhimurium LT2.</title>
        <authorList>
            <person name="McClelland M."/>
            <person name="Sanderson K.E."/>
            <person name="Spieth J."/>
            <person name="Clifton S.W."/>
            <person name="Latreille P."/>
            <person name="Courtney L."/>
            <person name="Porwollik S."/>
            <person name="Ali J."/>
            <person name="Dante M."/>
            <person name="Du F."/>
            <person name="Hou S."/>
            <person name="Layman D."/>
            <person name="Leonard S."/>
            <person name="Nguyen C."/>
            <person name="Scott K."/>
            <person name="Holmes A."/>
            <person name="Grewal N."/>
            <person name="Mulvaney E."/>
            <person name="Ryan E."/>
            <person name="Sun H."/>
            <person name="Florea L."/>
            <person name="Miller W."/>
            <person name="Stoneking T."/>
            <person name="Nhan M."/>
            <person name="Waterston R."/>
            <person name="Wilson R.K."/>
        </authorList>
    </citation>
    <scope>NUCLEOTIDE SEQUENCE [LARGE SCALE GENOMIC DNA]</scope>
    <source>
        <strain>LT2 / SGSC1412 / ATCC 700720</strain>
    </source>
</reference>
<proteinExistence type="inferred from homology"/>
<name>GNS_SALTY</name>
<sequence>MNSEELTHKAEEEIAALISKKVAELRKKTGQEVSEIEFAPRETMKGLEGYHVKIKLL</sequence>
<comment type="similarity">
    <text evidence="1">Belongs to the gns family.</text>
</comment>
<dbReference type="EMBL" id="AE006468">
    <property type="protein sequence ID" value="AAL20724.1"/>
    <property type="molecule type" value="Genomic_DNA"/>
</dbReference>
<dbReference type="RefSeq" id="NP_460765.1">
    <property type="nucleotide sequence ID" value="NC_003197.2"/>
</dbReference>
<dbReference type="RefSeq" id="WP_001083582.1">
    <property type="nucleotide sequence ID" value="NC_003197.2"/>
</dbReference>
<dbReference type="SMR" id="P64267"/>
<dbReference type="STRING" id="99287.STM1809"/>
<dbReference type="PaxDb" id="99287-STM1809"/>
<dbReference type="GeneID" id="1253328"/>
<dbReference type="KEGG" id="stm:STM1809"/>
<dbReference type="PATRIC" id="fig|99287.12.peg.1908"/>
<dbReference type="HOGENOM" id="CLU_197432_0_0_6"/>
<dbReference type="PhylomeDB" id="P64267"/>
<dbReference type="BioCyc" id="SENT99287:STM1809-MONOMER"/>
<dbReference type="Proteomes" id="UP000001014">
    <property type="component" value="Chromosome"/>
</dbReference>
<dbReference type="InterPro" id="IPR012563">
    <property type="entry name" value="Gns"/>
</dbReference>
<dbReference type="Pfam" id="PF08178">
    <property type="entry name" value="GnsAB_toxin"/>
    <property type="match status" value="1"/>
</dbReference>
<gene>
    <name type="primary">gns</name>
    <name type="ordered locus">STM1809</name>
</gene>
<accession>P64267</accession>
<accession>Q8XGE3</accession>
<keyword id="KW-1185">Reference proteome</keyword>
<feature type="chain" id="PRO_0000201725" description="Protein gns">
    <location>
        <begin position="1"/>
        <end position="57"/>
    </location>
</feature>